<name>Y729_SYNY3</name>
<sequence length="101" mass="10947">MTSTTPEIEALAADIGEQIAIDVAKWNLFLAEAHLHIPLAERVYPLLEKDELGRAGVEAALKDLSVAIGGGKVNISLLDALSSTMVNRLLTLLEEYQSKNF</sequence>
<organism>
    <name type="scientific">Synechocystis sp. (strain ATCC 27184 / PCC 6803 / Kazusa)</name>
    <dbReference type="NCBI Taxonomy" id="1111708"/>
    <lineage>
        <taxon>Bacteria</taxon>
        <taxon>Bacillati</taxon>
        <taxon>Cyanobacteriota</taxon>
        <taxon>Cyanophyceae</taxon>
        <taxon>Synechococcales</taxon>
        <taxon>Merismopediaceae</taxon>
        <taxon>Synechocystis</taxon>
    </lineage>
</organism>
<comment type="subcellular location">
    <subcellularLocation>
        <location evidence="1">Cellular thylakoid membrane</location>
        <topology evidence="1">Peripheral membrane protein</topology>
        <orientation evidence="1">Cytoplasmic side</orientation>
    </subcellularLocation>
</comment>
<gene>
    <name type="ordered locus">slr0729</name>
</gene>
<dbReference type="EMBL" id="BA000022">
    <property type="protein sequence ID" value="BAA16675.1"/>
    <property type="molecule type" value="Genomic_DNA"/>
</dbReference>
<dbReference type="PIR" id="S74523">
    <property type="entry name" value="S74523"/>
</dbReference>
<dbReference type="IntAct" id="P72673">
    <property type="interactions" value="2"/>
</dbReference>
<dbReference type="STRING" id="1148.gene:10497530"/>
<dbReference type="PaxDb" id="1148-1651747"/>
<dbReference type="EnsemblBacteria" id="BAA16675">
    <property type="protein sequence ID" value="BAA16675"/>
    <property type="gene ID" value="BAA16675"/>
</dbReference>
<dbReference type="KEGG" id="syn:slr0729"/>
<dbReference type="eggNOG" id="ENOG5032S4S">
    <property type="taxonomic scope" value="Bacteria"/>
</dbReference>
<dbReference type="InParanoid" id="P72673"/>
<dbReference type="Proteomes" id="UP000001425">
    <property type="component" value="Chromosome"/>
</dbReference>
<dbReference type="GO" id="GO:0031676">
    <property type="term" value="C:plasma membrane-derived thylakoid membrane"/>
    <property type="evidence" value="ECO:0007669"/>
    <property type="project" value="UniProtKB-SubCell"/>
</dbReference>
<dbReference type="InterPro" id="IPR021518">
    <property type="entry name" value="DUF3181"/>
</dbReference>
<dbReference type="Pfam" id="PF11378">
    <property type="entry name" value="DUF3181"/>
    <property type="match status" value="1"/>
</dbReference>
<feature type="chain" id="PRO_0000352749" description="Thylakoid-associated protein slr0729">
    <location>
        <begin position="1"/>
        <end position="101"/>
    </location>
</feature>
<reference key="1">
    <citation type="journal article" date="1996" name="DNA Res.">
        <title>Sequence analysis of the genome of the unicellular cyanobacterium Synechocystis sp. strain PCC6803. II. Sequence determination of the entire genome and assignment of potential protein-coding regions.</title>
        <authorList>
            <person name="Kaneko T."/>
            <person name="Sato S."/>
            <person name="Kotani H."/>
            <person name="Tanaka A."/>
            <person name="Asamizu E."/>
            <person name="Nakamura Y."/>
            <person name="Miyajima N."/>
            <person name="Hirosawa M."/>
            <person name="Sugiura M."/>
            <person name="Sasamoto S."/>
            <person name="Kimura T."/>
            <person name="Hosouchi T."/>
            <person name="Matsuno A."/>
            <person name="Muraki A."/>
            <person name="Nakazaki N."/>
            <person name="Naruo K."/>
            <person name="Okumura S."/>
            <person name="Shimpo S."/>
            <person name="Takeuchi C."/>
            <person name="Wada T."/>
            <person name="Watanabe A."/>
            <person name="Yamada M."/>
            <person name="Yasuda M."/>
            <person name="Tabata S."/>
        </authorList>
    </citation>
    <scope>NUCLEOTIDE SEQUENCE [LARGE SCALE GENOMIC DNA]</scope>
    <source>
        <strain>ATCC 27184 / PCC 6803 / Kazusa</strain>
    </source>
</reference>
<reference key="2">
    <citation type="journal article" date="2005" name="Proteomics">
        <title>Proteomic studies of the thylakoid membrane of Synechocystis sp. PCC 6803.</title>
        <authorList>
            <person name="Srivastava R."/>
            <person name="Pisareva T."/>
            <person name="Norling B."/>
        </authorList>
    </citation>
    <scope>SUBCELLULAR LOCATION IN THYLAKOID</scope>
</reference>
<evidence type="ECO:0000305" key="1">
    <source>
    </source>
</evidence>
<accession>P72673</accession>
<keyword id="KW-0472">Membrane</keyword>
<keyword id="KW-1185">Reference proteome</keyword>
<keyword id="KW-0793">Thylakoid</keyword>
<protein>
    <recommendedName>
        <fullName>Thylakoid-associated protein slr0729</fullName>
    </recommendedName>
</protein>
<proteinExistence type="predicted"/>